<organism>
    <name type="scientific">Nicotiana acuminata</name>
    <name type="common">Acuminate tobacco</name>
    <dbReference type="NCBI Taxonomy" id="4086"/>
    <lineage>
        <taxon>Eukaryota</taxon>
        <taxon>Viridiplantae</taxon>
        <taxon>Streptophyta</taxon>
        <taxon>Embryophyta</taxon>
        <taxon>Tracheophyta</taxon>
        <taxon>Spermatophyta</taxon>
        <taxon>Magnoliopsida</taxon>
        <taxon>eudicotyledons</taxon>
        <taxon>Gunneridae</taxon>
        <taxon>Pentapetalae</taxon>
        <taxon>asterids</taxon>
        <taxon>lamiids</taxon>
        <taxon>Solanales</taxon>
        <taxon>Solanaceae</taxon>
        <taxon>Nicotianoideae</taxon>
        <taxon>Nicotianeae</taxon>
        <taxon>Nicotiana</taxon>
    </lineage>
</organism>
<protein>
    <recommendedName>
        <fullName evidence="1">Ribulose bisphosphate carboxylase large chain</fullName>
        <shortName evidence="1">RuBisCO large subunit</shortName>
        <ecNumber evidence="1">4.1.1.39</ecNumber>
    </recommendedName>
</protein>
<accession>P11421</accession>
<proteinExistence type="inferred from homology"/>
<keyword id="KW-0007">Acetylation</keyword>
<keyword id="KW-0113">Calvin cycle</keyword>
<keyword id="KW-0120">Carbon dioxide fixation</keyword>
<keyword id="KW-0150">Chloroplast</keyword>
<keyword id="KW-1015">Disulfide bond</keyword>
<keyword id="KW-0456">Lyase</keyword>
<keyword id="KW-0460">Magnesium</keyword>
<keyword id="KW-0479">Metal-binding</keyword>
<keyword id="KW-0488">Methylation</keyword>
<keyword id="KW-0503">Monooxygenase</keyword>
<keyword id="KW-0560">Oxidoreductase</keyword>
<keyword id="KW-0601">Photorespiration</keyword>
<keyword id="KW-0602">Photosynthesis</keyword>
<keyword id="KW-0934">Plastid</keyword>
<feature type="propeptide" id="PRO_0000031423" evidence="1">
    <location>
        <begin position="1"/>
        <end position="2"/>
    </location>
</feature>
<feature type="chain" id="PRO_0000031424" description="Ribulose bisphosphate carboxylase large chain">
    <location>
        <begin position="3"/>
        <end position="477"/>
    </location>
</feature>
<feature type="active site" description="Proton acceptor" evidence="1">
    <location>
        <position position="175"/>
    </location>
</feature>
<feature type="active site" description="Proton acceptor" evidence="1">
    <location>
        <position position="294"/>
    </location>
</feature>
<feature type="binding site" description="in homodimeric partner" evidence="1">
    <location>
        <position position="123"/>
    </location>
    <ligand>
        <name>substrate</name>
    </ligand>
</feature>
<feature type="binding site" evidence="1">
    <location>
        <position position="173"/>
    </location>
    <ligand>
        <name>substrate</name>
    </ligand>
</feature>
<feature type="binding site" evidence="1">
    <location>
        <position position="177"/>
    </location>
    <ligand>
        <name>substrate</name>
    </ligand>
</feature>
<feature type="binding site" description="via carbamate group" evidence="1">
    <location>
        <position position="201"/>
    </location>
    <ligand>
        <name>Mg(2+)</name>
        <dbReference type="ChEBI" id="CHEBI:18420"/>
    </ligand>
</feature>
<feature type="binding site" evidence="1">
    <location>
        <position position="203"/>
    </location>
    <ligand>
        <name>Mg(2+)</name>
        <dbReference type="ChEBI" id="CHEBI:18420"/>
    </ligand>
</feature>
<feature type="binding site" evidence="1">
    <location>
        <position position="204"/>
    </location>
    <ligand>
        <name>Mg(2+)</name>
        <dbReference type="ChEBI" id="CHEBI:18420"/>
    </ligand>
</feature>
<feature type="binding site" evidence="1">
    <location>
        <position position="295"/>
    </location>
    <ligand>
        <name>substrate</name>
    </ligand>
</feature>
<feature type="binding site" evidence="1">
    <location>
        <position position="327"/>
    </location>
    <ligand>
        <name>substrate</name>
    </ligand>
</feature>
<feature type="binding site" evidence="1">
    <location>
        <position position="379"/>
    </location>
    <ligand>
        <name>substrate</name>
    </ligand>
</feature>
<feature type="site" description="Transition state stabilizer" evidence="1">
    <location>
        <position position="334"/>
    </location>
</feature>
<feature type="modified residue" description="N-acetylproline" evidence="1">
    <location>
        <position position="3"/>
    </location>
</feature>
<feature type="modified residue" description="N6,N6,N6-trimethyllysine" evidence="1">
    <location>
        <position position="14"/>
    </location>
</feature>
<feature type="modified residue" description="N6-carboxylysine" evidence="1">
    <location>
        <position position="201"/>
    </location>
</feature>
<feature type="disulfide bond" description="Interchain; in linked form" evidence="1">
    <location>
        <position position="247"/>
    </location>
</feature>
<sequence length="477" mass="52941">MSPQTETKASVGFKAGVKEYKLTYYTPEYQTKDTDILAAFRVTPQPGVPPEEAGAAVAAESSTGTWTTVWTDGLTSLDRYKGRCYRIERVVGEKDQYIAYVAYPLDLFEEGSVTNMFTSIVGNVFGFKALRALRLEDLRIPPAYVKTFQGPPHGIQVERDKLNKYGRPLLGCTIKPKLGLSAKNYGRAVYECLRGGLDFTKDDENVNSQPFMRWRDRFLFCAEAIYKAQTETGEIKGHYLNATAGTCEEMIKRAVFARELGVPIVMHDYLTGGFTANTSLAHYCRDNGLLLHIHRAMHAVIDRQKNHGIHFRVLAKALRMSGGDHIHSGTVVGKLEGERDITLGFVDLLRDDFVEQDRSRGIYFTQDWVSLPGVLPVASGGIHVWHMPALTEIFGDDSVLQFGGGTLGHPWGNAPGAVANRLALEACVQARNEGRDLAQEGNEIIREACKWSPELAAACQVWKEIVFNFAAVDVLDK</sequence>
<gene>
    <name evidence="1" type="primary">rbcL</name>
</gene>
<comment type="function">
    <text evidence="1">RuBisCO catalyzes two reactions: the carboxylation of D-ribulose 1,5-bisphosphate, the primary event in carbon dioxide fixation, as well as the oxidative fragmentation of the pentose substrate in the photorespiration process. Both reactions occur simultaneously and in competition at the same active site.</text>
</comment>
<comment type="catalytic activity">
    <reaction evidence="1">
        <text>2 (2R)-3-phosphoglycerate + 2 H(+) = D-ribulose 1,5-bisphosphate + CO2 + H2O</text>
        <dbReference type="Rhea" id="RHEA:23124"/>
        <dbReference type="ChEBI" id="CHEBI:15377"/>
        <dbReference type="ChEBI" id="CHEBI:15378"/>
        <dbReference type="ChEBI" id="CHEBI:16526"/>
        <dbReference type="ChEBI" id="CHEBI:57870"/>
        <dbReference type="ChEBI" id="CHEBI:58272"/>
        <dbReference type="EC" id="4.1.1.39"/>
    </reaction>
</comment>
<comment type="catalytic activity">
    <reaction evidence="1">
        <text>D-ribulose 1,5-bisphosphate + O2 = 2-phosphoglycolate + (2R)-3-phosphoglycerate + 2 H(+)</text>
        <dbReference type="Rhea" id="RHEA:36631"/>
        <dbReference type="ChEBI" id="CHEBI:15378"/>
        <dbReference type="ChEBI" id="CHEBI:15379"/>
        <dbReference type="ChEBI" id="CHEBI:57870"/>
        <dbReference type="ChEBI" id="CHEBI:58033"/>
        <dbReference type="ChEBI" id="CHEBI:58272"/>
    </reaction>
</comment>
<comment type="cofactor">
    <cofactor evidence="1">
        <name>Mg(2+)</name>
        <dbReference type="ChEBI" id="CHEBI:18420"/>
    </cofactor>
    <text evidence="1">Binds 1 Mg(2+) ion per subunit.</text>
</comment>
<comment type="subunit">
    <text evidence="1">Heterohexadecamer of 8 large chains and 8 small chains; disulfide-linked. The disulfide link is formed within the large subunit homodimers.</text>
</comment>
<comment type="subcellular location">
    <subcellularLocation>
        <location>Plastid</location>
        <location>Chloroplast</location>
    </subcellularLocation>
</comment>
<comment type="PTM">
    <text evidence="1">The disulfide bond which can form in the large chain dimeric partners within the hexadecamer appears to be associated with oxidative stress and protein turnover.</text>
</comment>
<comment type="miscellaneous">
    <text evidence="1">The basic functional RuBisCO is composed of a large chain homodimer in a 'head-to-tail' conformation. In form I RuBisCO this homodimer is arranged in a barrel-like tetramer with the small subunits forming a tetrameric 'cap' on each end of the 'barrel'.</text>
</comment>
<comment type="similarity">
    <text evidence="1">Belongs to the RuBisCO large chain family. Type I subfamily.</text>
</comment>
<evidence type="ECO:0000255" key="1">
    <source>
        <dbReference type="HAMAP-Rule" id="MF_01338"/>
    </source>
</evidence>
<geneLocation type="chloroplast"/>
<dbReference type="EC" id="4.1.1.39" evidence="1"/>
<dbReference type="EMBL" id="M16896">
    <property type="protein sequence ID" value="AAA84693.1"/>
    <property type="molecule type" value="Genomic_DNA"/>
</dbReference>
<dbReference type="PIR" id="S07936">
    <property type="entry name" value="RKNTLA"/>
</dbReference>
<dbReference type="SMR" id="P11421"/>
<dbReference type="GO" id="GO:0009507">
    <property type="term" value="C:chloroplast"/>
    <property type="evidence" value="ECO:0007669"/>
    <property type="project" value="UniProtKB-SubCell"/>
</dbReference>
<dbReference type="GO" id="GO:0000287">
    <property type="term" value="F:magnesium ion binding"/>
    <property type="evidence" value="ECO:0007669"/>
    <property type="project" value="UniProtKB-UniRule"/>
</dbReference>
<dbReference type="GO" id="GO:0004497">
    <property type="term" value="F:monooxygenase activity"/>
    <property type="evidence" value="ECO:0007669"/>
    <property type="project" value="UniProtKB-KW"/>
</dbReference>
<dbReference type="GO" id="GO:0016984">
    <property type="term" value="F:ribulose-bisphosphate carboxylase activity"/>
    <property type="evidence" value="ECO:0007669"/>
    <property type="project" value="UniProtKB-UniRule"/>
</dbReference>
<dbReference type="GO" id="GO:0009853">
    <property type="term" value="P:photorespiration"/>
    <property type="evidence" value="ECO:0007669"/>
    <property type="project" value="UniProtKB-KW"/>
</dbReference>
<dbReference type="GO" id="GO:0019253">
    <property type="term" value="P:reductive pentose-phosphate cycle"/>
    <property type="evidence" value="ECO:0007669"/>
    <property type="project" value="UniProtKB-UniRule"/>
</dbReference>
<dbReference type="CDD" id="cd08212">
    <property type="entry name" value="RuBisCO_large_I"/>
    <property type="match status" value="1"/>
</dbReference>
<dbReference type="FunFam" id="3.20.20.110:FF:000001">
    <property type="entry name" value="Ribulose bisphosphate carboxylase large chain"/>
    <property type="match status" value="1"/>
</dbReference>
<dbReference type="FunFam" id="3.30.70.150:FF:000001">
    <property type="entry name" value="Ribulose bisphosphate carboxylase large chain"/>
    <property type="match status" value="1"/>
</dbReference>
<dbReference type="Gene3D" id="3.20.20.110">
    <property type="entry name" value="Ribulose bisphosphate carboxylase, large subunit, C-terminal domain"/>
    <property type="match status" value="1"/>
</dbReference>
<dbReference type="Gene3D" id="3.30.70.150">
    <property type="entry name" value="RuBisCO large subunit, N-terminal domain"/>
    <property type="match status" value="1"/>
</dbReference>
<dbReference type="HAMAP" id="MF_01338">
    <property type="entry name" value="RuBisCO_L_type1"/>
    <property type="match status" value="1"/>
</dbReference>
<dbReference type="InterPro" id="IPR033966">
    <property type="entry name" value="RuBisCO"/>
</dbReference>
<dbReference type="InterPro" id="IPR020878">
    <property type="entry name" value="RuBisCo_large_chain_AS"/>
</dbReference>
<dbReference type="InterPro" id="IPR000685">
    <property type="entry name" value="RuBisCO_lsu_C"/>
</dbReference>
<dbReference type="InterPro" id="IPR036376">
    <property type="entry name" value="RuBisCO_lsu_C_sf"/>
</dbReference>
<dbReference type="InterPro" id="IPR017443">
    <property type="entry name" value="RuBisCO_lsu_fd_N"/>
</dbReference>
<dbReference type="InterPro" id="IPR036422">
    <property type="entry name" value="RuBisCO_lsu_N_sf"/>
</dbReference>
<dbReference type="InterPro" id="IPR020888">
    <property type="entry name" value="RuBisCO_lsuI"/>
</dbReference>
<dbReference type="NCBIfam" id="NF003252">
    <property type="entry name" value="PRK04208.1"/>
    <property type="match status" value="1"/>
</dbReference>
<dbReference type="PANTHER" id="PTHR42704">
    <property type="entry name" value="RIBULOSE BISPHOSPHATE CARBOXYLASE"/>
    <property type="match status" value="1"/>
</dbReference>
<dbReference type="PANTHER" id="PTHR42704:SF16">
    <property type="entry name" value="RIBULOSE BISPHOSPHATE CARBOXYLASE LARGE CHAIN"/>
    <property type="match status" value="1"/>
</dbReference>
<dbReference type="Pfam" id="PF00016">
    <property type="entry name" value="RuBisCO_large"/>
    <property type="match status" value="1"/>
</dbReference>
<dbReference type="Pfam" id="PF02788">
    <property type="entry name" value="RuBisCO_large_N"/>
    <property type="match status" value="1"/>
</dbReference>
<dbReference type="SFLD" id="SFLDG01052">
    <property type="entry name" value="RuBisCO"/>
    <property type="match status" value="1"/>
</dbReference>
<dbReference type="SFLD" id="SFLDS00014">
    <property type="entry name" value="RuBisCO"/>
    <property type="match status" value="1"/>
</dbReference>
<dbReference type="SFLD" id="SFLDG00301">
    <property type="entry name" value="RuBisCO-like_proteins"/>
    <property type="match status" value="1"/>
</dbReference>
<dbReference type="SUPFAM" id="SSF51649">
    <property type="entry name" value="RuBisCo, C-terminal domain"/>
    <property type="match status" value="1"/>
</dbReference>
<dbReference type="SUPFAM" id="SSF54966">
    <property type="entry name" value="RuBisCO, large subunit, small (N-terminal) domain"/>
    <property type="match status" value="1"/>
</dbReference>
<dbReference type="PROSITE" id="PS00157">
    <property type="entry name" value="RUBISCO_LARGE"/>
    <property type="match status" value="1"/>
</dbReference>
<reference key="1">
    <citation type="journal article" date="1986" name="Plant Mol. Biol.">
        <title>Nicotiana chloroplast genome: X. Correlation between the DNA sequences and the isoelectric focusing patterns of the LS of Rubisco.</title>
        <authorList>
            <person name="Lin C.M."/>
            <person name="Liu Z.Q."/>
            <person name="Kung S.D."/>
        </authorList>
        <dbReference type="AGRICOLA" id="IND86033720"/>
    </citation>
    <scope>NUCLEOTIDE SEQUENCE [GENOMIC DNA]</scope>
</reference>
<name>RBL_NICAC</name>